<proteinExistence type="evidence at protein level"/>
<keyword id="KW-0963">Cytoplasm</keyword>
<keyword id="KW-0507">mRNA processing</keyword>
<keyword id="KW-0508">mRNA splicing</keyword>
<keyword id="KW-0539">Nucleus</keyword>
<keyword id="KW-0597">Phosphoprotein</keyword>
<keyword id="KW-1185">Reference proteome</keyword>
<name>AAR2_SCHPO</name>
<reference key="1">
    <citation type="journal article" date="2002" name="Nature">
        <title>The genome sequence of Schizosaccharomyces pombe.</title>
        <authorList>
            <person name="Wood V."/>
            <person name="Gwilliam R."/>
            <person name="Rajandream M.A."/>
            <person name="Lyne M.H."/>
            <person name="Lyne R."/>
            <person name="Stewart A."/>
            <person name="Sgouros J.G."/>
            <person name="Peat N."/>
            <person name="Hayles J."/>
            <person name="Baker S.G."/>
            <person name="Basham D."/>
            <person name="Bowman S."/>
            <person name="Brooks K."/>
            <person name="Brown D."/>
            <person name="Brown S."/>
            <person name="Chillingworth T."/>
            <person name="Churcher C.M."/>
            <person name="Collins M."/>
            <person name="Connor R."/>
            <person name="Cronin A."/>
            <person name="Davis P."/>
            <person name="Feltwell T."/>
            <person name="Fraser A."/>
            <person name="Gentles S."/>
            <person name="Goble A."/>
            <person name="Hamlin N."/>
            <person name="Harris D.E."/>
            <person name="Hidalgo J."/>
            <person name="Hodgson G."/>
            <person name="Holroyd S."/>
            <person name="Hornsby T."/>
            <person name="Howarth S."/>
            <person name="Huckle E.J."/>
            <person name="Hunt S."/>
            <person name="Jagels K."/>
            <person name="James K.D."/>
            <person name="Jones L."/>
            <person name="Jones M."/>
            <person name="Leather S."/>
            <person name="McDonald S."/>
            <person name="McLean J."/>
            <person name="Mooney P."/>
            <person name="Moule S."/>
            <person name="Mungall K.L."/>
            <person name="Murphy L.D."/>
            <person name="Niblett D."/>
            <person name="Odell C."/>
            <person name="Oliver K."/>
            <person name="O'Neil S."/>
            <person name="Pearson D."/>
            <person name="Quail M.A."/>
            <person name="Rabbinowitsch E."/>
            <person name="Rutherford K.M."/>
            <person name="Rutter S."/>
            <person name="Saunders D."/>
            <person name="Seeger K."/>
            <person name="Sharp S."/>
            <person name="Skelton J."/>
            <person name="Simmonds M.N."/>
            <person name="Squares R."/>
            <person name="Squares S."/>
            <person name="Stevens K."/>
            <person name="Taylor K."/>
            <person name="Taylor R.G."/>
            <person name="Tivey A."/>
            <person name="Walsh S.V."/>
            <person name="Warren T."/>
            <person name="Whitehead S."/>
            <person name="Woodward J.R."/>
            <person name="Volckaert G."/>
            <person name="Aert R."/>
            <person name="Robben J."/>
            <person name="Grymonprez B."/>
            <person name="Weltjens I."/>
            <person name="Vanstreels E."/>
            <person name="Rieger M."/>
            <person name="Schaefer M."/>
            <person name="Mueller-Auer S."/>
            <person name="Gabel C."/>
            <person name="Fuchs M."/>
            <person name="Duesterhoeft A."/>
            <person name="Fritzc C."/>
            <person name="Holzer E."/>
            <person name="Moestl D."/>
            <person name="Hilbert H."/>
            <person name="Borzym K."/>
            <person name="Langer I."/>
            <person name="Beck A."/>
            <person name="Lehrach H."/>
            <person name="Reinhardt R."/>
            <person name="Pohl T.M."/>
            <person name="Eger P."/>
            <person name="Zimmermann W."/>
            <person name="Wedler H."/>
            <person name="Wambutt R."/>
            <person name="Purnelle B."/>
            <person name="Goffeau A."/>
            <person name="Cadieu E."/>
            <person name="Dreano S."/>
            <person name="Gloux S."/>
            <person name="Lelaure V."/>
            <person name="Mottier S."/>
            <person name="Galibert F."/>
            <person name="Aves S.J."/>
            <person name="Xiang Z."/>
            <person name="Hunt C."/>
            <person name="Moore K."/>
            <person name="Hurst S.M."/>
            <person name="Lucas M."/>
            <person name="Rochet M."/>
            <person name="Gaillardin C."/>
            <person name="Tallada V.A."/>
            <person name="Garzon A."/>
            <person name="Thode G."/>
            <person name="Daga R.R."/>
            <person name="Cruzado L."/>
            <person name="Jimenez J."/>
            <person name="Sanchez M."/>
            <person name="del Rey F."/>
            <person name="Benito J."/>
            <person name="Dominguez A."/>
            <person name="Revuelta J.L."/>
            <person name="Moreno S."/>
            <person name="Armstrong J."/>
            <person name="Forsburg S.L."/>
            <person name="Cerutti L."/>
            <person name="Lowe T."/>
            <person name="McCombie W.R."/>
            <person name="Paulsen I."/>
            <person name="Potashkin J."/>
            <person name="Shpakovski G.V."/>
            <person name="Ussery D."/>
            <person name="Barrell B.G."/>
            <person name="Nurse P."/>
        </authorList>
    </citation>
    <scope>NUCLEOTIDE SEQUENCE [LARGE SCALE GENOMIC DNA]</scope>
    <source>
        <strain>972 / ATCC 24843</strain>
    </source>
</reference>
<reference key="2">
    <citation type="journal article" date="2006" name="Nat. Biotechnol.">
        <title>ORFeome cloning and global analysis of protein localization in the fission yeast Schizosaccharomyces pombe.</title>
        <authorList>
            <person name="Matsuyama A."/>
            <person name="Arai R."/>
            <person name="Yashiroda Y."/>
            <person name="Shirai A."/>
            <person name="Kamata A."/>
            <person name="Sekido S."/>
            <person name="Kobayashi Y."/>
            <person name="Hashimoto A."/>
            <person name="Hamamoto M."/>
            <person name="Hiraoka Y."/>
            <person name="Horinouchi S."/>
            <person name="Yoshida M."/>
        </authorList>
    </citation>
    <scope>SUBCELLULAR LOCATION [LARGE SCALE ANALYSIS]</scope>
</reference>
<reference key="3">
    <citation type="journal article" date="2008" name="J. Proteome Res.">
        <title>Phosphoproteome analysis of fission yeast.</title>
        <authorList>
            <person name="Wilson-Grady J.T."/>
            <person name="Villen J."/>
            <person name="Gygi S.P."/>
        </authorList>
    </citation>
    <scope>PHOSPHORYLATION [LARGE SCALE ANALYSIS] AT SER-160</scope>
    <scope>IDENTIFICATION BY MASS SPECTROMETRY</scope>
</reference>
<gene>
    <name type="primary">aar2</name>
    <name type="ORF">SPAC3H5.04</name>
</gene>
<feature type="chain" id="PRO_0000339113" description="A1 cistron-splicing factor aar2">
    <location>
        <begin position="1"/>
        <end position="346"/>
    </location>
</feature>
<feature type="modified residue" description="Phosphoserine" evidence="3">
    <location>
        <position position="160"/>
    </location>
</feature>
<evidence type="ECO:0000250" key="1"/>
<evidence type="ECO:0000269" key="2">
    <source>
    </source>
</evidence>
<evidence type="ECO:0000269" key="3">
    <source>
    </source>
</evidence>
<evidence type="ECO:0000305" key="4"/>
<accession>Q6LA53</accession>
<organism>
    <name type="scientific">Schizosaccharomyces pombe (strain 972 / ATCC 24843)</name>
    <name type="common">Fission yeast</name>
    <dbReference type="NCBI Taxonomy" id="284812"/>
    <lineage>
        <taxon>Eukaryota</taxon>
        <taxon>Fungi</taxon>
        <taxon>Dikarya</taxon>
        <taxon>Ascomycota</taxon>
        <taxon>Taphrinomycotina</taxon>
        <taxon>Schizosaccharomycetes</taxon>
        <taxon>Schizosaccharomycetales</taxon>
        <taxon>Schizosaccharomycetaceae</taxon>
        <taxon>Schizosaccharomyces</taxon>
    </lineage>
</organism>
<protein>
    <recommendedName>
        <fullName>A1 cistron-splicing factor aar2</fullName>
    </recommendedName>
</protein>
<dbReference type="EMBL" id="CU329670">
    <property type="protein sequence ID" value="CAB16590.1"/>
    <property type="molecule type" value="Genomic_DNA"/>
</dbReference>
<dbReference type="PIR" id="T38750">
    <property type="entry name" value="T38750"/>
</dbReference>
<dbReference type="RefSeq" id="NP_594188.1">
    <property type="nucleotide sequence ID" value="NM_001019612.2"/>
</dbReference>
<dbReference type="SMR" id="Q6LA53"/>
<dbReference type="BioGRID" id="280025">
    <property type="interactions" value="3"/>
</dbReference>
<dbReference type="FunCoup" id="Q6LA53">
    <property type="interactions" value="464"/>
</dbReference>
<dbReference type="STRING" id="284812.Q6LA53"/>
<dbReference type="iPTMnet" id="Q6LA53"/>
<dbReference type="PaxDb" id="4896-SPAC3H5.04.1"/>
<dbReference type="EnsemblFungi" id="SPAC3H5.04.1">
    <property type="protein sequence ID" value="SPAC3H5.04.1:pep"/>
    <property type="gene ID" value="SPAC3H5.04"/>
</dbReference>
<dbReference type="GeneID" id="2543611"/>
<dbReference type="KEGG" id="spo:2543611"/>
<dbReference type="PomBase" id="SPAC3H5.04">
    <property type="gene designation" value="aar2"/>
</dbReference>
<dbReference type="VEuPathDB" id="FungiDB:SPAC3H5.04"/>
<dbReference type="eggNOG" id="KOG3937">
    <property type="taxonomic scope" value="Eukaryota"/>
</dbReference>
<dbReference type="HOGENOM" id="CLU_809321_0_0_1"/>
<dbReference type="InParanoid" id="Q6LA53"/>
<dbReference type="OMA" id="GSSLQWH"/>
<dbReference type="PhylomeDB" id="Q6LA53"/>
<dbReference type="PRO" id="PR:Q6LA53"/>
<dbReference type="Proteomes" id="UP000002485">
    <property type="component" value="Chromosome I"/>
</dbReference>
<dbReference type="GO" id="GO:0005829">
    <property type="term" value="C:cytosol"/>
    <property type="evidence" value="ECO:0007005"/>
    <property type="project" value="PomBase"/>
</dbReference>
<dbReference type="GO" id="GO:0005634">
    <property type="term" value="C:nucleus"/>
    <property type="evidence" value="ECO:0007005"/>
    <property type="project" value="PomBase"/>
</dbReference>
<dbReference type="GO" id="GO:0005681">
    <property type="term" value="C:spliceosomal complex"/>
    <property type="evidence" value="ECO:0000303"/>
    <property type="project" value="PomBase"/>
</dbReference>
<dbReference type="GO" id="GO:0005682">
    <property type="term" value="C:U5 snRNP"/>
    <property type="evidence" value="ECO:0000266"/>
    <property type="project" value="PomBase"/>
</dbReference>
<dbReference type="GO" id="GO:0045292">
    <property type="term" value="P:mRNA cis splicing, via spliceosome"/>
    <property type="evidence" value="ECO:0000315"/>
    <property type="project" value="PomBase"/>
</dbReference>
<dbReference type="GO" id="GO:0000244">
    <property type="term" value="P:spliceosomal tri-snRNP complex assembly"/>
    <property type="evidence" value="ECO:0000318"/>
    <property type="project" value="GO_Central"/>
</dbReference>
<dbReference type="CDD" id="cd13778">
    <property type="entry name" value="Aar2_C"/>
    <property type="match status" value="1"/>
</dbReference>
<dbReference type="CDD" id="cd13777">
    <property type="entry name" value="Aar2_N"/>
    <property type="match status" value="1"/>
</dbReference>
<dbReference type="Gene3D" id="2.60.34.20">
    <property type="match status" value="1"/>
</dbReference>
<dbReference type="Gene3D" id="1.25.40.550">
    <property type="entry name" value="Aar2, C-terminal domain-like"/>
    <property type="match status" value="1"/>
</dbReference>
<dbReference type="InterPro" id="IPR007946">
    <property type="entry name" value="AAR2"/>
</dbReference>
<dbReference type="InterPro" id="IPR033648">
    <property type="entry name" value="AAR2_C"/>
</dbReference>
<dbReference type="InterPro" id="IPR038514">
    <property type="entry name" value="AAR2_C_sf"/>
</dbReference>
<dbReference type="InterPro" id="IPR033647">
    <property type="entry name" value="Aar2_N"/>
</dbReference>
<dbReference type="InterPro" id="IPR038516">
    <property type="entry name" value="AAR2_N_sf"/>
</dbReference>
<dbReference type="PANTHER" id="PTHR12689">
    <property type="entry name" value="A1 CISTRON SPLICING FACTOR AAR2-RELATED"/>
    <property type="match status" value="1"/>
</dbReference>
<dbReference type="PANTHER" id="PTHR12689:SF4">
    <property type="entry name" value="PROTEIN AAR2 HOMOLOG"/>
    <property type="match status" value="1"/>
</dbReference>
<dbReference type="Pfam" id="PF05282">
    <property type="entry name" value="AAR2"/>
    <property type="match status" value="1"/>
</dbReference>
<dbReference type="Pfam" id="PF20981">
    <property type="entry name" value="AAR2_1st"/>
    <property type="match status" value="1"/>
</dbReference>
<sequence length="346" mass="39225">MSIEFVGWLNTYYVGIDQSSYEASKLPGIRNVKGGIHLFTWSPTYPAGLISGVFAMVHEDMKYSIDFDSKSETASLQKLDVLYDENFYPFESTKDWDLLTKFITVQDLQRIFATEGEFFYLDTSTYVNADLVSQDPEFSKPSRDDKLLNFAEFNLRRSWSPSATGPERSKQAIDKSFLFQRLVQSVWNDNPISALAELSISFLSYSILSHYGALEHWKNMLSLLLQSYELAETEPEFYASFLELFKLQLSSLSESDLETSAIFEKGVLLSCLDSLSERKVDGSFGSLVNEAIENLLKTISELLNSHEEQAGLMQKGDLYSAADYEAEVHETGDYVIDVSTEEDPIH</sequence>
<comment type="function">
    <text evidence="1">Component of the U5 snRNP complex that is required for spliceosome assembly and for pre-mRNA splicing. Involved in splicing pre-mRNA of the A1 cistron and other genes that are important for cell growth (By similarity).</text>
</comment>
<comment type="subcellular location">
    <subcellularLocation>
        <location evidence="2">Cytoplasm</location>
    </subcellularLocation>
    <subcellularLocation>
        <location evidence="2">Nucleus</location>
    </subcellularLocation>
</comment>
<comment type="similarity">
    <text evidence="4">Belongs to the AAR2 family.</text>
</comment>